<protein>
    <recommendedName>
        <fullName evidence="3">Transcriptional regulator NarO</fullName>
    </recommendedName>
    <alternativeName>
        <fullName evidence="4">Bacterioopsin transcriptional activator</fullName>
    </alternativeName>
    <alternativeName>
        <fullName evidence="3">DNA-binding protein NarO</fullName>
    </alternativeName>
</protein>
<gene>
    <name evidence="3 5" type="primary">narO</name>
    <name evidence="5" type="synonym">boa9</name>
    <name evidence="5" type="ordered locus">HVO_B0159</name>
    <name evidence="6" type="ORF">C498_02845</name>
</gene>
<organism evidence="5">
    <name type="scientific">Haloferax volcanii (strain ATCC 29605 / DSM 3757 / JCM 8879 / NBRC 14742 / NCIMB 2012 / VKM B-1768 / DS2)</name>
    <name type="common">Halobacterium volcanii</name>
    <dbReference type="NCBI Taxonomy" id="309800"/>
    <lineage>
        <taxon>Archaea</taxon>
        <taxon>Methanobacteriati</taxon>
        <taxon>Methanobacteriota</taxon>
        <taxon>Stenosarchaea group</taxon>
        <taxon>Halobacteria</taxon>
        <taxon>Halobacteriales</taxon>
        <taxon>Haloferacaceae</taxon>
        <taxon>Haloferax</taxon>
    </lineage>
</organism>
<dbReference type="EMBL" id="CP001953">
    <property type="protein sequence ID" value="ADE01511.2"/>
    <property type="molecule type" value="Genomic_DNA"/>
</dbReference>
<dbReference type="EMBL" id="AOHU01000022">
    <property type="protein sequence ID" value="ELY36420.1"/>
    <property type="molecule type" value="Genomic_DNA"/>
</dbReference>
<dbReference type="RefSeq" id="WP_004041376.1">
    <property type="nucleotide sequence ID" value="NC_013964.1"/>
</dbReference>
<dbReference type="PaxDb" id="309800-C498_02845"/>
<dbReference type="EnsemblBacteria" id="ADE01511">
    <property type="protein sequence ID" value="ADE01511"/>
    <property type="gene ID" value="HVO_B0159"/>
</dbReference>
<dbReference type="GeneID" id="8919217"/>
<dbReference type="KEGG" id="hvo:HVO_B0159"/>
<dbReference type="PATRIC" id="fig|309800.29.peg.556"/>
<dbReference type="eggNOG" id="arCOG02280">
    <property type="taxonomic scope" value="Archaea"/>
</dbReference>
<dbReference type="OrthoDB" id="168808at2157"/>
<dbReference type="Proteomes" id="UP000008243">
    <property type="component" value="Plasmid pHV3"/>
</dbReference>
<dbReference type="Proteomes" id="UP000011532">
    <property type="component" value="Unassembled WGS sequence"/>
</dbReference>
<dbReference type="GO" id="GO:0003677">
    <property type="term" value="F:DNA binding"/>
    <property type="evidence" value="ECO:0007669"/>
    <property type="project" value="UniProtKB-KW"/>
</dbReference>
<dbReference type="GO" id="GO:0071249">
    <property type="term" value="P:cellular response to nitrate"/>
    <property type="evidence" value="ECO:0000270"/>
    <property type="project" value="UniProtKB"/>
</dbReference>
<dbReference type="GO" id="GO:0045893">
    <property type="term" value="P:positive regulation of DNA-templated transcription"/>
    <property type="evidence" value="ECO:0000315"/>
    <property type="project" value="UniProtKB"/>
</dbReference>
<dbReference type="Gene3D" id="1.10.10.10">
    <property type="entry name" value="Winged helix-like DNA-binding domain superfamily/Winged helix DNA-binding domain"/>
    <property type="match status" value="1"/>
</dbReference>
<dbReference type="InterPro" id="IPR056433">
    <property type="entry name" value="DmsR-like_N"/>
</dbReference>
<dbReference type="InterPro" id="IPR007050">
    <property type="entry name" value="HTH_bacterioopsin"/>
</dbReference>
<dbReference type="InterPro" id="IPR036388">
    <property type="entry name" value="WH-like_DNA-bd_sf"/>
</dbReference>
<dbReference type="PANTHER" id="PTHR34236">
    <property type="entry name" value="DIMETHYL SULFOXIDE REDUCTASE TRANSCRIPTIONAL ACTIVATOR"/>
    <property type="match status" value="1"/>
</dbReference>
<dbReference type="PANTHER" id="PTHR34236:SF1">
    <property type="entry name" value="DIMETHYL SULFOXIDE REDUCTASE TRANSCRIPTIONAL ACTIVATOR"/>
    <property type="match status" value="1"/>
</dbReference>
<dbReference type="Pfam" id="PF24277">
    <property type="entry name" value="DmsR_N"/>
    <property type="match status" value="1"/>
</dbReference>
<dbReference type="Pfam" id="PF04967">
    <property type="entry name" value="HTH_10"/>
    <property type="match status" value="1"/>
</dbReference>
<proteinExistence type="evidence at protein level"/>
<evidence type="ECO:0000255" key="1"/>
<evidence type="ECO:0000269" key="2">
    <source>
    </source>
</evidence>
<evidence type="ECO:0000303" key="3">
    <source>
    </source>
</evidence>
<evidence type="ECO:0000305" key="4"/>
<evidence type="ECO:0000312" key="5">
    <source>
        <dbReference type="EMBL" id="ADE01511.2"/>
    </source>
</evidence>
<evidence type="ECO:0000312" key="6">
    <source>
        <dbReference type="EMBL" id="ELY36420.1"/>
    </source>
</evidence>
<evidence type="ECO:0000312" key="7">
    <source>
        <dbReference type="Proteomes" id="UP000008243"/>
    </source>
</evidence>
<evidence type="ECO:0000312" key="8">
    <source>
        <dbReference type="Proteomes" id="UP000011532"/>
    </source>
</evidence>
<sequence length="211" mass="22887">MNEGVHGEIHVADPSICRVSEASKETAVESVSRSVGATGDTAAVEFTAPSSAAIDDADEIFHHEQKTIYRVTHSFTEESRCACELIEGHGCPVRHLEADCGAVVLSFVAADLESFRDIVVNLKSAFDGVSLRRLTQSEPDSATGSLVFVDRDELTARQREVLETAHEMGYFEHPREANATEVAAALDINRSTFTEHLSAAQSKLLDTILDV</sequence>
<reference evidence="5 7" key="1">
    <citation type="journal article" date="2010" name="PLoS ONE">
        <title>The complete genome sequence of Haloferax volcanii DS2, a model archaeon.</title>
        <authorList>
            <person name="Hartman A.L."/>
            <person name="Norais C."/>
            <person name="Badger J.H."/>
            <person name="Delmas S."/>
            <person name="Haldenby S."/>
            <person name="Madupu R."/>
            <person name="Robinson J."/>
            <person name="Khouri H."/>
            <person name="Ren Q."/>
            <person name="Lowe T.M."/>
            <person name="Maupin-Furlow J."/>
            <person name="Pohlschroder M."/>
            <person name="Daniels C."/>
            <person name="Pfeiffer F."/>
            <person name="Allers T."/>
            <person name="Eisen J.A."/>
        </authorList>
    </citation>
    <scope>NUCLEOTIDE SEQUENCE [LARGE SCALE GENOMIC DNA]</scope>
    <source>
        <strain evidence="7">ATCC 29605 / DSM 3757 / JCM 8879 / NBRC 14742 / NCIMB 2012 / VKM B-1768 / DS2</strain>
        <plasmid evidence="5">pHV3</plasmid>
    </source>
</reference>
<reference evidence="6 8" key="2">
    <citation type="journal article" date="2014" name="PLoS Genet.">
        <title>Phylogenetically driven sequencing of extremely halophilic archaea reveals strategies for static and dynamic osmo-response.</title>
        <authorList>
            <person name="Becker E.A."/>
            <person name="Seitzer P.M."/>
            <person name="Tritt A."/>
            <person name="Larsen D."/>
            <person name="Krusor M."/>
            <person name="Yao A.I."/>
            <person name="Wu D."/>
            <person name="Madern D."/>
            <person name="Eisen J.A."/>
            <person name="Darling A.E."/>
            <person name="Facciotti M.T."/>
        </authorList>
    </citation>
    <scope>NUCLEOTIDE SEQUENCE [LARGE SCALE GENOMIC DNA]</scope>
    <source>
        <strain evidence="8">ATCC 29605 / DSM 3757 / JCM 8879 / NBRC 14742 / NCIMB 2012 / VKM B-1768 / DS2</strain>
    </source>
</reference>
<reference key="3">
    <citation type="journal article" date="2016" name="J. Bacteriol.">
        <title>Anaerobic Growth of Haloarchaeon Haloferax volcanii by Denitrification Is Controlled by the Transcription Regulator NarO.</title>
        <authorList>
            <person name="Hattori T."/>
            <person name="Shiba H."/>
            <person name="Ashiki K."/>
            <person name="Araki T."/>
            <person name="Nagashima Y.K."/>
            <person name="Yoshimatsu K."/>
            <person name="Fujiwara T."/>
        </authorList>
    </citation>
    <scope>FUNCTION</scope>
    <scope>INDUCTION</scope>
    <scope>DISRUPTION PHENOTYPE</scope>
    <scope>MUTAGENESIS OF CYS-17; CYS-81; CYS-83; CYS-91 AND CYS-100</scope>
    <source>
        <strain evidence="3">DS2 / DS70</strain>
    </source>
</reference>
<comment type="function">
    <text evidence="2">Activates transcription of the denitrifying genes (nitrate reductase narA and nitrite reductase nirK) under anaerobic conditions.</text>
</comment>
<comment type="induction">
    <text evidence="2">Constitutively expressed regardless of cultivation under aerobic or anaerobic conditions. Increased expression under denitrifying conditions.</text>
</comment>
<comment type="disruption phenotype">
    <text evidence="2">Cells lacking this gene are not able to grow anaerobically by denitrification. Inactivated transcription of the denitrifying genes (nitrate reductase narA and nitrite reductase nirK). No effect on growth under aerobic conditions. No effect on dimethyl sulfoxide (DMSO) respiration.</text>
</comment>
<keyword id="KW-0010">Activator</keyword>
<keyword id="KW-0238">DNA-binding</keyword>
<keyword id="KW-0614">Plasmid</keyword>
<keyword id="KW-1185">Reference proteome</keyword>
<keyword id="KW-0804">Transcription</keyword>
<keyword id="KW-0805">Transcription regulation</keyword>
<accession>D4GPG1</accession>
<accession>A0A1U8QYC0</accession>
<accession>A0A384KE70</accession>
<accession>L9VGT6</accession>
<feature type="chain" id="PRO_0000454762" description="Transcriptional regulator NarO">
    <location>
        <begin position="1"/>
        <end position="211"/>
    </location>
</feature>
<feature type="domain" description="HTH bat-type" evidence="1">
    <location>
        <begin position="154"/>
        <end position="205"/>
    </location>
</feature>
<feature type="mutagenesis site" description="Unable to grow under denitrifying conditions. Normal growth under aerobic conditions." evidence="2">
    <original>C</original>
    <variation>S</variation>
    <location>
        <position position="17"/>
    </location>
</feature>
<feature type="mutagenesis site" description="Unable to grow under denitrifying conditions. Normal growth under aerobic conditions." evidence="2">
    <original>C</original>
    <variation>S</variation>
    <location>
        <position position="81"/>
    </location>
</feature>
<feature type="mutagenesis site" description="Unable to grow under denitrifying conditions. Normal growth under aerobic conditions." evidence="2">
    <original>C</original>
    <variation>S</variation>
    <location>
        <position position="83"/>
    </location>
</feature>
<feature type="mutagenesis site" description="Unable to grow under denitrifying conditions. Normal growth under aerobic conditions." evidence="2">
    <original>C</original>
    <variation>S</variation>
    <location>
        <position position="91"/>
    </location>
</feature>
<feature type="mutagenesis site" description="Normal growth under denitrifying conditions. Normal growth under aerobic conditions." evidence="2">
    <original>C</original>
    <variation>S</variation>
    <location>
        <position position="100"/>
    </location>
</feature>
<geneLocation type="plasmid" evidence="5 7">
    <name>pHV3</name>
</geneLocation>
<name>NARO_HALVD</name>